<name>RNPA_STRP2</name>
<feature type="chain" id="PRO_1000021475" description="Ribonuclease P protein component">
    <location>
        <begin position="1"/>
        <end position="123"/>
    </location>
</feature>
<keyword id="KW-0255">Endonuclease</keyword>
<keyword id="KW-0378">Hydrolase</keyword>
<keyword id="KW-0540">Nuclease</keyword>
<keyword id="KW-1185">Reference proteome</keyword>
<keyword id="KW-0694">RNA-binding</keyword>
<keyword id="KW-0819">tRNA processing</keyword>
<protein>
    <recommendedName>
        <fullName evidence="1">Ribonuclease P protein component</fullName>
        <shortName evidence="1">RNase P protein</shortName>
        <shortName evidence="1">RNaseP protein</shortName>
        <ecNumber evidence="1">3.1.26.5</ecNumber>
    </recommendedName>
    <alternativeName>
        <fullName evidence="1">Protein C5</fullName>
    </alternativeName>
</protein>
<comment type="function">
    <text evidence="1">RNaseP catalyzes the removal of the 5'-leader sequence from pre-tRNA to produce the mature 5'-terminus. It can also cleave other RNA substrates such as 4.5S RNA. The protein component plays an auxiliary but essential role in vivo by binding to the 5'-leader sequence and broadening the substrate specificity of the ribozyme.</text>
</comment>
<comment type="catalytic activity">
    <reaction evidence="1">
        <text>Endonucleolytic cleavage of RNA, removing 5'-extranucleotides from tRNA precursor.</text>
        <dbReference type="EC" id="3.1.26.5"/>
    </reaction>
</comment>
<comment type="subunit">
    <text evidence="1">Consists of a catalytic RNA component (M1 or rnpB) and a protein subunit.</text>
</comment>
<comment type="similarity">
    <text evidence="1">Belongs to the RnpA family.</text>
</comment>
<sequence length="123" mass="14281">MKKNFRVKREKDFKAIFKEGTSFANRKFVVYQLENQKNHFRVGLSVSKKLGNAVTRNQIKRRIRHIIQNAKGSLVEDVDFVVIARKGVETLGYAEMEKNLLHVLKLSKIYREGNGSEKETKVD</sequence>
<evidence type="ECO:0000255" key="1">
    <source>
        <dbReference type="HAMAP-Rule" id="MF_00227"/>
    </source>
</evidence>
<proteinExistence type="inferred from homology"/>
<reference key="1">
    <citation type="journal article" date="2007" name="J. Bacteriol.">
        <title>Genome sequence of Avery's virulent serotype 2 strain D39 of Streptococcus pneumoniae and comparison with that of unencapsulated laboratory strain R6.</title>
        <authorList>
            <person name="Lanie J.A."/>
            <person name="Ng W.-L."/>
            <person name="Kazmierczak K.M."/>
            <person name="Andrzejewski T.M."/>
            <person name="Davidsen T.M."/>
            <person name="Wayne K.J."/>
            <person name="Tettelin H."/>
            <person name="Glass J.I."/>
            <person name="Winkler M.E."/>
        </authorList>
    </citation>
    <scope>NUCLEOTIDE SEQUENCE [LARGE SCALE GENOMIC DNA]</scope>
    <source>
        <strain>D39 / NCTC 7466</strain>
    </source>
</reference>
<organism>
    <name type="scientific">Streptococcus pneumoniae serotype 2 (strain D39 / NCTC 7466)</name>
    <dbReference type="NCBI Taxonomy" id="373153"/>
    <lineage>
        <taxon>Bacteria</taxon>
        <taxon>Bacillati</taxon>
        <taxon>Bacillota</taxon>
        <taxon>Bacilli</taxon>
        <taxon>Lactobacillales</taxon>
        <taxon>Streptococcaceae</taxon>
        <taxon>Streptococcus</taxon>
    </lineage>
</organism>
<dbReference type="EC" id="3.1.26.5" evidence="1"/>
<dbReference type="EMBL" id="CP000410">
    <property type="protein sequence ID" value="ABJ54189.1"/>
    <property type="molecule type" value="Genomic_DNA"/>
</dbReference>
<dbReference type="RefSeq" id="WP_000739246.1">
    <property type="nucleotide sequence ID" value="NZ_JAMLJR010000015.1"/>
</dbReference>
<dbReference type="SMR" id="Q04ID0"/>
<dbReference type="PaxDb" id="373153-SPD_1851"/>
<dbReference type="GeneID" id="45652735"/>
<dbReference type="KEGG" id="spd:SPD_1851"/>
<dbReference type="eggNOG" id="COG0594">
    <property type="taxonomic scope" value="Bacteria"/>
</dbReference>
<dbReference type="HOGENOM" id="CLU_117179_9_1_9"/>
<dbReference type="BioCyc" id="SPNE373153:G1G6V-1997-MONOMER"/>
<dbReference type="Proteomes" id="UP000001452">
    <property type="component" value="Chromosome"/>
</dbReference>
<dbReference type="GO" id="GO:0030677">
    <property type="term" value="C:ribonuclease P complex"/>
    <property type="evidence" value="ECO:0007669"/>
    <property type="project" value="TreeGrafter"/>
</dbReference>
<dbReference type="GO" id="GO:0042781">
    <property type="term" value="F:3'-tRNA processing endoribonuclease activity"/>
    <property type="evidence" value="ECO:0007669"/>
    <property type="project" value="TreeGrafter"/>
</dbReference>
<dbReference type="GO" id="GO:0004526">
    <property type="term" value="F:ribonuclease P activity"/>
    <property type="evidence" value="ECO:0007669"/>
    <property type="project" value="UniProtKB-UniRule"/>
</dbReference>
<dbReference type="GO" id="GO:0000049">
    <property type="term" value="F:tRNA binding"/>
    <property type="evidence" value="ECO:0007669"/>
    <property type="project" value="UniProtKB-UniRule"/>
</dbReference>
<dbReference type="GO" id="GO:0001682">
    <property type="term" value="P:tRNA 5'-leader removal"/>
    <property type="evidence" value="ECO:0007669"/>
    <property type="project" value="UniProtKB-UniRule"/>
</dbReference>
<dbReference type="FunFam" id="3.30.230.10:FF:000021">
    <property type="entry name" value="Ribonuclease P protein component"/>
    <property type="match status" value="1"/>
</dbReference>
<dbReference type="Gene3D" id="3.30.230.10">
    <property type="match status" value="1"/>
</dbReference>
<dbReference type="HAMAP" id="MF_00227">
    <property type="entry name" value="RNase_P"/>
    <property type="match status" value="1"/>
</dbReference>
<dbReference type="InterPro" id="IPR020568">
    <property type="entry name" value="Ribosomal_Su5_D2-typ_SF"/>
</dbReference>
<dbReference type="InterPro" id="IPR014721">
    <property type="entry name" value="Ribsml_uS5_D2-typ_fold_subgr"/>
</dbReference>
<dbReference type="InterPro" id="IPR000100">
    <property type="entry name" value="RNase_P"/>
</dbReference>
<dbReference type="InterPro" id="IPR020539">
    <property type="entry name" value="RNase_P_CS"/>
</dbReference>
<dbReference type="NCBIfam" id="TIGR00188">
    <property type="entry name" value="rnpA"/>
    <property type="match status" value="1"/>
</dbReference>
<dbReference type="PANTHER" id="PTHR33992">
    <property type="entry name" value="RIBONUCLEASE P PROTEIN COMPONENT"/>
    <property type="match status" value="1"/>
</dbReference>
<dbReference type="PANTHER" id="PTHR33992:SF1">
    <property type="entry name" value="RIBONUCLEASE P PROTEIN COMPONENT"/>
    <property type="match status" value="1"/>
</dbReference>
<dbReference type="Pfam" id="PF00825">
    <property type="entry name" value="Ribonuclease_P"/>
    <property type="match status" value="1"/>
</dbReference>
<dbReference type="SUPFAM" id="SSF54211">
    <property type="entry name" value="Ribosomal protein S5 domain 2-like"/>
    <property type="match status" value="1"/>
</dbReference>
<dbReference type="PROSITE" id="PS00648">
    <property type="entry name" value="RIBONUCLEASE_P"/>
    <property type="match status" value="1"/>
</dbReference>
<gene>
    <name evidence="1" type="primary">rnpA</name>
    <name type="ordered locus">SPD_1851</name>
</gene>
<accession>Q04ID0</accession>